<keyword id="KW-0560">Oxidoreductase</keyword>
<proteinExistence type="inferred from homology"/>
<sequence length="142" mass="16263">MLKKDKSELTDIEYIVTQENGTEPPFMNEYWNHFAKGIYVDKISGKPLFTSEEKFHSECGWPSFSKALDDDEIIELVDKSFGMVRTEVRSEESNSHLGHVFNDGPKESGGLRYCINSAAIQFIPYEKLEELGYGDLISHFDK</sequence>
<accession>P65451</accession>
<accession>Q99U64</accession>
<comment type="catalytic activity">
    <reaction evidence="1">
        <text>L-methionyl-[protein] + [thioredoxin]-disulfide + H2O = L-methionyl-(R)-S-oxide-[protein] + [thioredoxin]-dithiol</text>
        <dbReference type="Rhea" id="RHEA:24164"/>
        <dbReference type="Rhea" id="RHEA-COMP:10698"/>
        <dbReference type="Rhea" id="RHEA-COMP:10700"/>
        <dbReference type="Rhea" id="RHEA-COMP:12313"/>
        <dbReference type="Rhea" id="RHEA-COMP:12314"/>
        <dbReference type="ChEBI" id="CHEBI:15377"/>
        <dbReference type="ChEBI" id="CHEBI:16044"/>
        <dbReference type="ChEBI" id="CHEBI:29950"/>
        <dbReference type="ChEBI" id="CHEBI:45764"/>
        <dbReference type="ChEBI" id="CHEBI:50058"/>
        <dbReference type="EC" id="1.8.4.12"/>
    </reaction>
</comment>
<comment type="similarity">
    <text evidence="1">Belongs to the MsrB Met sulfoxide reductase family.</text>
</comment>
<evidence type="ECO:0000255" key="1">
    <source>
        <dbReference type="HAMAP-Rule" id="MF_01400"/>
    </source>
</evidence>
<evidence type="ECO:0000255" key="2">
    <source>
        <dbReference type="PROSITE-ProRule" id="PRU01126"/>
    </source>
</evidence>
<dbReference type="EC" id="1.8.4.12" evidence="1"/>
<dbReference type="EMBL" id="BA000017">
    <property type="protein sequence ID" value="BAB57585.1"/>
    <property type="molecule type" value="Genomic_DNA"/>
</dbReference>
<dbReference type="RefSeq" id="WP_000913317.1">
    <property type="nucleotide sequence ID" value="NC_002758.2"/>
</dbReference>
<dbReference type="SMR" id="P65451"/>
<dbReference type="KEGG" id="sav:SAV1423"/>
<dbReference type="HOGENOM" id="CLU_031040_8_5_9"/>
<dbReference type="PhylomeDB" id="P65451"/>
<dbReference type="Proteomes" id="UP000002481">
    <property type="component" value="Chromosome"/>
</dbReference>
<dbReference type="GO" id="GO:0005737">
    <property type="term" value="C:cytoplasm"/>
    <property type="evidence" value="ECO:0007669"/>
    <property type="project" value="TreeGrafter"/>
</dbReference>
<dbReference type="GO" id="GO:0033743">
    <property type="term" value="F:peptide-methionine (R)-S-oxide reductase activity"/>
    <property type="evidence" value="ECO:0007669"/>
    <property type="project" value="UniProtKB-UniRule"/>
</dbReference>
<dbReference type="GO" id="GO:0030091">
    <property type="term" value="P:protein repair"/>
    <property type="evidence" value="ECO:0007669"/>
    <property type="project" value="InterPro"/>
</dbReference>
<dbReference type="GO" id="GO:0006979">
    <property type="term" value="P:response to oxidative stress"/>
    <property type="evidence" value="ECO:0007669"/>
    <property type="project" value="InterPro"/>
</dbReference>
<dbReference type="FunFam" id="2.170.150.20:FF:000003">
    <property type="entry name" value="Peptide methionine sulfoxide reductase MsrB"/>
    <property type="match status" value="1"/>
</dbReference>
<dbReference type="Gene3D" id="2.170.150.20">
    <property type="entry name" value="Peptide methionine sulfoxide reductase"/>
    <property type="match status" value="1"/>
</dbReference>
<dbReference type="HAMAP" id="MF_01400">
    <property type="entry name" value="MsrB"/>
    <property type="match status" value="1"/>
</dbReference>
<dbReference type="InterPro" id="IPR028427">
    <property type="entry name" value="Met_Sox_Rdtase_MsrB"/>
</dbReference>
<dbReference type="InterPro" id="IPR002579">
    <property type="entry name" value="Met_Sox_Rdtase_MsrB_dom"/>
</dbReference>
<dbReference type="InterPro" id="IPR011057">
    <property type="entry name" value="Mss4-like_sf"/>
</dbReference>
<dbReference type="NCBIfam" id="TIGR00357">
    <property type="entry name" value="peptide-methionine (R)-S-oxide reductase MsrB"/>
    <property type="match status" value="1"/>
</dbReference>
<dbReference type="PANTHER" id="PTHR10173">
    <property type="entry name" value="METHIONINE SULFOXIDE REDUCTASE"/>
    <property type="match status" value="1"/>
</dbReference>
<dbReference type="PANTHER" id="PTHR10173:SF59">
    <property type="entry name" value="PEPTIDE METHIONINE SULFOXIDE REDUCTASE MSRA_MSRB"/>
    <property type="match status" value="1"/>
</dbReference>
<dbReference type="Pfam" id="PF01641">
    <property type="entry name" value="SelR"/>
    <property type="match status" value="1"/>
</dbReference>
<dbReference type="SUPFAM" id="SSF51316">
    <property type="entry name" value="Mss4-like"/>
    <property type="match status" value="1"/>
</dbReference>
<dbReference type="PROSITE" id="PS51790">
    <property type="entry name" value="MSRB"/>
    <property type="match status" value="1"/>
</dbReference>
<name>MSRB_STAAM</name>
<organism>
    <name type="scientific">Staphylococcus aureus (strain Mu50 / ATCC 700699)</name>
    <dbReference type="NCBI Taxonomy" id="158878"/>
    <lineage>
        <taxon>Bacteria</taxon>
        <taxon>Bacillati</taxon>
        <taxon>Bacillota</taxon>
        <taxon>Bacilli</taxon>
        <taxon>Bacillales</taxon>
        <taxon>Staphylococcaceae</taxon>
        <taxon>Staphylococcus</taxon>
    </lineage>
</organism>
<reference key="1">
    <citation type="journal article" date="2001" name="Lancet">
        <title>Whole genome sequencing of meticillin-resistant Staphylococcus aureus.</title>
        <authorList>
            <person name="Kuroda M."/>
            <person name="Ohta T."/>
            <person name="Uchiyama I."/>
            <person name="Baba T."/>
            <person name="Yuzawa H."/>
            <person name="Kobayashi I."/>
            <person name="Cui L."/>
            <person name="Oguchi A."/>
            <person name="Aoki K."/>
            <person name="Nagai Y."/>
            <person name="Lian J.-Q."/>
            <person name="Ito T."/>
            <person name="Kanamori M."/>
            <person name="Matsumaru H."/>
            <person name="Maruyama A."/>
            <person name="Murakami H."/>
            <person name="Hosoyama A."/>
            <person name="Mizutani-Ui Y."/>
            <person name="Takahashi N.K."/>
            <person name="Sawano T."/>
            <person name="Inoue R."/>
            <person name="Kaito C."/>
            <person name="Sekimizu K."/>
            <person name="Hirakawa H."/>
            <person name="Kuhara S."/>
            <person name="Goto S."/>
            <person name="Yabuzaki J."/>
            <person name="Kanehisa M."/>
            <person name="Yamashita A."/>
            <person name="Oshima K."/>
            <person name="Furuya K."/>
            <person name="Yoshino C."/>
            <person name="Shiba T."/>
            <person name="Hattori M."/>
            <person name="Ogasawara N."/>
            <person name="Hayashi H."/>
            <person name="Hiramatsu K."/>
        </authorList>
    </citation>
    <scope>NUCLEOTIDE SEQUENCE [LARGE SCALE GENOMIC DNA]</scope>
    <source>
        <strain>Mu50 / ATCC 700699</strain>
    </source>
</reference>
<gene>
    <name evidence="1" type="primary">msrB</name>
    <name type="ordered locus">SAV1423</name>
</gene>
<protein>
    <recommendedName>
        <fullName evidence="1">Peptide methionine sulfoxide reductase MsrB</fullName>
        <ecNumber evidence="1">1.8.4.12</ecNumber>
    </recommendedName>
    <alternativeName>
        <fullName evidence="1">Peptide-methionine (R)-S-oxide reductase</fullName>
    </alternativeName>
</protein>
<feature type="chain" id="PRO_0000140295" description="Peptide methionine sulfoxide reductase MsrB">
    <location>
        <begin position="1"/>
        <end position="142"/>
    </location>
</feature>
<feature type="domain" description="MsrB" evidence="2">
    <location>
        <begin position="2"/>
        <end position="125"/>
    </location>
</feature>
<feature type="active site" description="Nucleophile" evidence="2">
    <location>
        <position position="114"/>
    </location>
</feature>